<accession>C0PXB0</accession>
<organism>
    <name type="scientific">Salmonella paratyphi C (strain RKS4594)</name>
    <dbReference type="NCBI Taxonomy" id="476213"/>
    <lineage>
        <taxon>Bacteria</taxon>
        <taxon>Pseudomonadati</taxon>
        <taxon>Pseudomonadota</taxon>
        <taxon>Gammaproteobacteria</taxon>
        <taxon>Enterobacterales</taxon>
        <taxon>Enterobacteriaceae</taxon>
        <taxon>Salmonella</taxon>
    </lineage>
</organism>
<gene>
    <name evidence="1" type="primary">cysC</name>
    <name type="ordered locus">SPC_2976</name>
</gene>
<name>CYSC_SALPC</name>
<proteinExistence type="inferred from homology"/>
<keyword id="KW-0067">ATP-binding</keyword>
<keyword id="KW-0418">Kinase</keyword>
<keyword id="KW-0547">Nucleotide-binding</keyword>
<keyword id="KW-0597">Phosphoprotein</keyword>
<keyword id="KW-0808">Transferase</keyword>
<protein>
    <recommendedName>
        <fullName evidence="1">Adenylyl-sulfate kinase</fullName>
        <ecNumber evidence="1">2.7.1.25</ecNumber>
    </recommendedName>
    <alternativeName>
        <fullName evidence="1">APS kinase</fullName>
    </alternativeName>
    <alternativeName>
        <fullName evidence="1">ATP adenosine-5'-phosphosulfate 3'-phosphotransferase</fullName>
    </alternativeName>
    <alternativeName>
        <fullName evidence="1">Adenosine-5'-phosphosulfate kinase</fullName>
    </alternativeName>
</protein>
<reference key="1">
    <citation type="journal article" date="2009" name="PLoS ONE">
        <title>Salmonella paratyphi C: genetic divergence from Salmonella choleraesuis and pathogenic convergence with Salmonella typhi.</title>
        <authorList>
            <person name="Liu W.-Q."/>
            <person name="Feng Y."/>
            <person name="Wang Y."/>
            <person name="Zou Q.-H."/>
            <person name="Chen F."/>
            <person name="Guo J.-T."/>
            <person name="Peng Y.-H."/>
            <person name="Jin Y."/>
            <person name="Li Y.-G."/>
            <person name="Hu S.-N."/>
            <person name="Johnston R.N."/>
            <person name="Liu G.-R."/>
            <person name="Liu S.-L."/>
        </authorList>
    </citation>
    <scope>NUCLEOTIDE SEQUENCE [LARGE SCALE GENOMIC DNA]</scope>
    <source>
        <strain>RKS4594</strain>
    </source>
</reference>
<comment type="function">
    <text evidence="1">Catalyzes the synthesis of activated sulfate.</text>
</comment>
<comment type="catalytic activity">
    <reaction evidence="1">
        <text>adenosine 5'-phosphosulfate + ATP = 3'-phosphoadenylyl sulfate + ADP + H(+)</text>
        <dbReference type="Rhea" id="RHEA:24152"/>
        <dbReference type="ChEBI" id="CHEBI:15378"/>
        <dbReference type="ChEBI" id="CHEBI:30616"/>
        <dbReference type="ChEBI" id="CHEBI:58243"/>
        <dbReference type="ChEBI" id="CHEBI:58339"/>
        <dbReference type="ChEBI" id="CHEBI:456216"/>
        <dbReference type="EC" id="2.7.1.25"/>
    </reaction>
</comment>
<comment type="pathway">
    <text evidence="1">Sulfur metabolism; hydrogen sulfide biosynthesis; sulfite from sulfate: step 2/3.</text>
</comment>
<comment type="similarity">
    <text evidence="1">Belongs to the APS kinase family.</text>
</comment>
<sequence length="201" mass="22394">MALHDENVVWHSHPVTVAAREQLHGHRGVVLWFTGLSGSGKSTVAGALEEALHHRGVSTYLLDGDNVRHGLCRDLGFSDADRQENIRRVGEVASLMADAGLIVLTAFISPHRAERQLVKERVGHDRFIEIYVNTPLAICEQRDPKGLYKKARAGELRNFTGIDAIYEAPDSPQVHLNGEQLVTNLVSQLLDLLRRRDIIRS</sequence>
<dbReference type="EC" id="2.7.1.25" evidence="1"/>
<dbReference type="EMBL" id="CP000857">
    <property type="protein sequence ID" value="ACN47068.1"/>
    <property type="molecule type" value="Genomic_DNA"/>
</dbReference>
<dbReference type="RefSeq" id="WP_001173659.1">
    <property type="nucleotide sequence ID" value="NC_012125.1"/>
</dbReference>
<dbReference type="SMR" id="C0PXB0"/>
<dbReference type="KEGG" id="sei:SPC_2976"/>
<dbReference type="HOGENOM" id="CLU_046932_1_0_6"/>
<dbReference type="UniPathway" id="UPA00140">
    <property type="reaction ID" value="UER00205"/>
</dbReference>
<dbReference type="Proteomes" id="UP000001599">
    <property type="component" value="Chromosome"/>
</dbReference>
<dbReference type="GO" id="GO:0004020">
    <property type="term" value="F:adenylylsulfate kinase activity"/>
    <property type="evidence" value="ECO:0007669"/>
    <property type="project" value="UniProtKB-UniRule"/>
</dbReference>
<dbReference type="GO" id="GO:0005524">
    <property type="term" value="F:ATP binding"/>
    <property type="evidence" value="ECO:0007669"/>
    <property type="project" value="UniProtKB-UniRule"/>
</dbReference>
<dbReference type="GO" id="GO:0070814">
    <property type="term" value="P:hydrogen sulfide biosynthetic process"/>
    <property type="evidence" value="ECO:0007669"/>
    <property type="project" value="UniProtKB-UniRule"/>
</dbReference>
<dbReference type="GO" id="GO:0000103">
    <property type="term" value="P:sulfate assimilation"/>
    <property type="evidence" value="ECO:0007669"/>
    <property type="project" value="UniProtKB-UniRule"/>
</dbReference>
<dbReference type="CDD" id="cd02027">
    <property type="entry name" value="APSK"/>
    <property type="match status" value="1"/>
</dbReference>
<dbReference type="FunFam" id="3.40.50.300:FF:000212">
    <property type="entry name" value="Adenylyl-sulfate kinase"/>
    <property type="match status" value="1"/>
</dbReference>
<dbReference type="Gene3D" id="3.40.50.300">
    <property type="entry name" value="P-loop containing nucleotide triphosphate hydrolases"/>
    <property type="match status" value="1"/>
</dbReference>
<dbReference type="HAMAP" id="MF_00065">
    <property type="entry name" value="Adenylyl_sulf_kinase"/>
    <property type="match status" value="1"/>
</dbReference>
<dbReference type="InterPro" id="IPR002891">
    <property type="entry name" value="APS_kinase"/>
</dbReference>
<dbReference type="InterPro" id="IPR027417">
    <property type="entry name" value="P-loop_NTPase"/>
</dbReference>
<dbReference type="NCBIfam" id="TIGR00455">
    <property type="entry name" value="apsK"/>
    <property type="match status" value="1"/>
</dbReference>
<dbReference type="NCBIfam" id="NF003013">
    <property type="entry name" value="PRK03846.1"/>
    <property type="match status" value="1"/>
</dbReference>
<dbReference type="PANTHER" id="PTHR11055:SF63">
    <property type="entry name" value="ADENYLYL-SULFATE KINASE 1, CHLOROPLASTIC"/>
    <property type="match status" value="1"/>
</dbReference>
<dbReference type="PANTHER" id="PTHR11055">
    <property type="entry name" value="BIFUNCTIONAL 3'-PHOSPHOADENOSINE 5'-PHOSPHOSULFATE SYNTHASE"/>
    <property type="match status" value="1"/>
</dbReference>
<dbReference type="Pfam" id="PF01583">
    <property type="entry name" value="APS_kinase"/>
    <property type="match status" value="1"/>
</dbReference>
<dbReference type="SUPFAM" id="SSF52540">
    <property type="entry name" value="P-loop containing nucleoside triphosphate hydrolases"/>
    <property type="match status" value="1"/>
</dbReference>
<feature type="chain" id="PRO_1000117956" description="Adenylyl-sulfate kinase">
    <location>
        <begin position="1"/>
        <end position="201"/>
    </location>
</feature>
<feature type="active site" description="Phosphoserine intermediate" evidence="1">
    <location>
        <position position="109"/>
    </location>
</feature>
<feature type="binding site" evidence="1">
    <location>
        <begin position="35"/>
        <end position="42"/>
    </location>
    <ligand>
        <name>ATP</name>
        <dbReference type="ChEBI" id="CHEBI:30616"/>
    </ligand>
</feature>
<evidence type="ECO:0000255" key="1">
    <source>
        <dbReference type="HAMAP-Rule" id="MF_00065"/>
    </source>
</evidence>